<reference key="1">
    <citation type="journal article" date="2007" name="Science">
        <title>Legumes symbioses: absence of nod genes in photosynthetic bradyrhizobia.</title>
        <authorList>
            <person name="Giraud E."/>
            <person name="Moulin L."/>
            <person name="Vallenet D."/>
            <person name="Barbe V."/>
            <person name="Cytryn E."/>
            <person name="Avarre J.-C."/>
            <person name="Jaubert M."/>
            <person name="Simon D."/>
            <person name="Cartieaux F."/>
            <person name="Prin Y."/>
            <person name="Bena G."/>
            <person name="Hannibal L."/>
            <person name="Fardoux J."/>
            <person name="Kojadinovic M."/>
            <person name="Vuillet L."/>
            <person name="Lajus A."/>
            <person name="Cruveiller S."/>
            <person name="Rouy Z."/>
            <person name="Mangenot S."/>
            <person name="Segurens B."/>
            <person name="Dossat C."/>
            <person name="Franck W.L."/>
            <person name="Chang W.-S."/>
            <person name="Saunders E."/>
            <person name="Bruce D."/>
            <person name="Richardson P."/>
            <person name="Normand P."/>
            <person name="Dreyfus B."/>
            <person name="Pignol D."/>
            <person name="Stacey G."/>
            <person name="Emerich D."/>
            <person name="Vermeglio A."/>
            <person name="Medigue C."/>
            <person name="Sadowsky M."/>
        </authorList>
    </citation>
    <scope>NUCLEOTIDE SEQUENCE [LARGE SCALE GENOMIC DNA]</scope>
    <source>
        <strain>ORS 278</strain>
    </source>
</reference>
<feature type="chain" id="PRO_1000125342" description="Probable nicotinate-nucleotide adenylyltransferase">
    <location>
        <begin position="1"/>
        <end position="192"/>
    </location>
</feature>
<dbReference type="EC" id="2.7.7.18" evidence="1"/>
<dbReference type="EMBL" id="CU234118">
    <property type="protein sequence ID" value="CAL74376.1"/>
    <property type="molecule type" value="Genomic_DNA"/>
</dbReference>
<dbReference type="SMR" id="A4YKF0"/>
<dbReference type="STRING" id="114615.BRADO0429"/>
<dbReference type="KEGG" id="bra:BRADO0429"/>
<dbReference type="eggNOG" id="COG1057">
    <property type="taxonomic scope" value="Bacteria"/>
</dbReference>
<dbReference type="HOGENOM" id="CLU_069765_2_0_5"/>
<dbReference type="UniPathway" id="UPA00253">
    <property type="reaction ID" value="UER00332"/>
</dbReference>
<dbReference type="Proteomes" id="UP000001994">
    <property type="component" value="Chromosome"/>
</dbReference>
<dbReference type="GO" id="GO:0005524">
    <property type="term" value="F:ATP binding"/>
    <property type="evidence" value="ECO:0007669"/>
    <property type="project" value="UniProtKB-KW"/>
</dbReference>
<dbReference type="GO" id="GO:0004515">
    <property type="term" value="F:nicotinate-nucleotide adenylyltransferase activity"/>
    <property type="evidence" value="ECO:0007669"/>
    <property type="project" value="UniProtKB-UniRule"/>
</dbReference>
<dbReference type="GO" id="GO:0009435">
    <property type="term" value="P:NAD biosynthetic process"/>
    <property type="evidence" value="ECO:0007669"/>
    <property type="project" value="UniProtKB-UniRule"/>
</dbReference>
<dbReference type="CDD" id="cd02165">
    <property type="entry name" value="NMNAT"/>
    <property type="match status" value="1"/>
</dbReference>
<dbReference type="Gene3D" id="3.40.50.620">
    <property type="entry name" value="HUPs"/>
    <property type="match status" value="1"/>
</dbReference>
<dbReference type="HAMAP" id="MF_00244">
    <property type="entry name" value="NaMN_adenylyltr"/>
    <property type="match status" value="1"/>
</dbReference>
<dbReference type="InterPro" id="IPR004821">
    <property type="entry name" value="Cyt_trans-like"/>
</dbReference>
<dbReference type="InterPro" id="IPR005248">
    <property type="entry name" value="NadD/NMNAT"/>
</dbReference>
<dbReference type="InterPro" id="IPR014729">
    <property type="entry name" value="Rossmann-like_a/b/a_fold"/>
</dbReference>
<dbReference type="NCBIfam" id="TIGR00482">
    <property type="entry name" value="nicotinate (nicotinamide) nucleotide adenylyltransferase"/>
    <property type="match status" value="1"/>
</dbReference>
<dbReference type="NCBIfam" id="NF000843">
    <property type="entry name" value="PRK00071.2-2"/>
    <property type="match status" value="1"/>
</dbReference>
<dbReference type="NCBIfam" id="NF000845">
    <property type="entry name" value="PRK00071.2-4"/>
    <property type="match status" value="1"/>
</dbReference>
<dbReference type="NCBIfam" id="NF000846">
    <property type="entry name" value="PRK00071.2-5"/>
    <property type="match status" value="1"/>
</dbReference>
<dbReference type="PANTHER" id="PTHR39321">
    <property type="entry name" value="NICOTINATE-NUCLEOTIDE ADENYLYLTRANSFERASE-RELATED"/>
    <property type="match status" value="1"/>
</dbReference>
<dbReference type="PANTHER" id="PTHR39321:SF3">
    <property type="entry name" value="PHOSPHOPANTETHEINE ADENYLYLTRANSFERASE"/>
    <property type="match status" value="1"/>
</dbReference>
<dbReference type="Pfam" id="PF01467">
    <property type="entry name" value="CTP_transf_like"/>
    <property type="match status" value="1"/>
</dbReference>
<dbReference type="SUPFAM" id="SSF52374">
    <property type="entry name" value="Nucleotidylyl transferase"/>
    <property type="match status" value="1"/>
</dbReference>
<protein>
    <recommendedName>
        <fullName evidence="1">Probable nicotinate-nucleotide adenylyltransferase</fullName>
        <ecNumber evidence="1">2.7.7.18</ecNumber>
    </recommendedName>
    <alternativeName>
        <fullName evidence="1">Deamido-NAD(+) diphosphorylase</fullName>
    </alternativeName>
    <alternativeName>
        <fullName evidence="1">Deamido-NAD(+) pyrophosphorylase</fullName>
    </alternativeName>
    <alternativeName>
        <fullName evidence="1">Nicotinate mononucleotide adenylyltransferase</fullName>
        <shortName evidence="1">NaMN adenylyltransferase</shortName>
    </alternativeName>
</protein>
<sequence length="192" mass="21459">MRIGLLGGSFNPPHQAHRAISLFALKRLQLDRVWWLVTPGNPLKDNGGLHALAERAAAARKVAADPRIEISCLESVIGTRYTADTIDYLRRRASRLRFVWIMGADNLAQFHRWQKWQHIAAQVPIAVVDRPPRSFRALNAPAARALARYRVAEADASRLADRAAPAWVYLTGLKMSLSSTGLRNPDGSWKSF</sequence>
<accession>A4YKF0</accession>
<organism>
    <name type="scientific">Bradyrhizobium sp. (strain ORS 278)</name>
    <dbReference type="NCBI Taxonomy" id="114615"/>
    <lineage>
        <taxon>Bacteria</taxon>
        <taxon>Pseudomonadati</taxon>
        <taxon>Pseudomonadota</taxon>
        <taxon>Alphaproteobacteria</taxon>
        <taxon>Hyphomicrobiales</taxon>
        <taxon>Nitrobacteraceae</taxon>
        <taxon>Bradyrhizobium</taxon>
    </lineage>
</organism>
<name>NADD_BRASO</name>
<comment type="function">
    <text evidence="1">Catalyzes the reversible adenylation of nicotinate mononucleotide (NaMN) to nicotinic acid adenine dinucleotide (NaAD).</text>
</comment>
<comment type="catalytic activity">
    <reaction evidence="1">
        <text>nicotinate beta-D-ribonucleotide + ATP + H(+) = deamido-NAD(+) + diphosphate</text>
        <dbReference type="Rhea" id="RHEA:22860"/>
        <dbReference type="ChEBI" id="CHEBI:15378"/>
        <dbReference type="ChEBI" id="CHEBI:30616"/>
        <dbReference type="ChEBI" id="CHEBI:33019"/>
        <dbReference type="ChEBI" id="CHEBI:57502"/>
        <dbReference type="ChEBI" id="CHEBI:58437"/>
        <dbReference type="EC" id="2.7.7.18"/>
    </reaction>
</comment>
<comment type="pathway">
    <text evidence="1">Cofactor biosynthesis; NAD(+) biosynthesis; deamido-NAD(+) from nicotinate D-ribonucleotide: step 1/1.</text>
</comment>
<comment type="similarity">
    <text evidence="1">Belongs to the NadD family.</text>
</comment>
<gene>
    <name evidence="1" type="primary">nadD</name>
    <name type="ordered locus">BRADO0429</name>
</gene>
<keyword id="KW-0067">ATP-binding</keyword>
<keyword id="KW-0520">NAD</keyword>
<keyword id="KW-0547">Nucleotide-binding</keyword>
<keyword id="KW-0548">Nucleotidyltransferase</keyword>
<keyword id="KW-0662">Pyridine nucleotide biosynthesis</keyword>
<keyword id="KW-1185">Reference proteome</keyword>
<keyword id="KW-0808">Transferase</keyword>
<proteinExistence type="inferred from homology"/>
<evidence type="ECO:0000255" key="1">
    <source>
        <dbReference type="HAMAP-Rule" id="MF_00244"/>
    </source>
</evidence>